<sequence>MATIKQIQFKRTKVAGSRPTAAQLAEGELAINLKDRTIFTKDDLNQIIDLGFAKGGEVSGDITQIGNYTQTGNYNLTGDATISGKTTTSTLDVGSVSDLRQTNFRPVLSTTTGSNFIISNSGGLIKPITLTVEGTATSSNTILRHSVDTTVAASGFIDSINVSLNPTDGALVTALNGTVNIGSSLKTPKLSVSGAETALGDYSISIGDNDTGFKWNSDGVFSLVTDSNSIYTYSRDRTYSNRPTNFRYTSDFDATTPALAPPGTWLASVETAIDGNAYGDGMSYLGYKDTAGYSFYFRGGGTFNVASKGGFNVDTAAAFAKTVDVSDILTCSSIIKAKGPGQVDVTSAGNIALGGTIQWVPSYMSGSPNRARDTIATAAWGDADQRINVLETSDPHGWWYYIQRAGSGSSSPTGIEGRVNGSWQASDLISDNTLRVAGAFTCTRRNSAGWGDNAGWYAGATPVVANQGNVQEMDPGVGGFYPGFAQYNYNGTGWNQAFVLGLLGQGVQRWRRGVLALRGDGPVDAGQQIARWYFSQEDGSLESEGPLKAPSVQAGQITSFGVNVTNALGSASIAIGDNDTGLRWGGDGIVQIVANNAIVGGWNSTDIFTEAGKHITSNGNLNQWGGGAIYCRDLNVSSDRRIKKDIKAFENPVDILSTIGGYTYLIEKGFNEDGSQAYEESAGLIAQEVEAVLPRLVKISNDGTKDVKRLNYNGITALNTAAINVHTKEINELKKQLKELKDIVKFLTK</sequence>
<accession>M1EAS5</accession>
<protein>
    <recommendedName>
        <fullName evidence="6">Long tail fiber protein Gp37</fullName>
    </recommendedName>
    <alternativeName>
        <fullName evidence="5">Gene product 37</fullName>
        <shortName evidence="5">gp37</shortName>
    </alternativeName>
    <alternativeName>
        <fullName>Receptor-recognizing protein</fullName>
    </alternativeName>
    <component>
        <recommendedName>
            <fullName evidence="6">Mature tail fiber protein Gp37</fullName>
        </recommendedName>
    </component>
    <component>
        <recommendedName>
            <fullName evidence="6">Intramolecular chaperone</fullName>
        </recommendedName>
    </component>
</protein>
<keyword id="KW-0002">3D-structure</keyword>
<keyword id="KW-0175">Coiled coil</keyword>
<keyword id="KW-0945">Host-virus interaction</keyword>
<keyword id="KW-1185">Reference proteome</keyword>
<keyword id="KW-1161">Viral attachment to host cell</keyword>
<keyword id="KW-1230">Viral tail fiber protein</keyword>
<keyword id="KW-1227">Viral tail protein</keyword>
<keyword id="KW-0946">Virion</keyword>
<keyword id="KW-1160">Virus entry into host cell</keyword>
<organism>
    <name type="scientific">Salmonella phage S16</name>
    <name type="common">Salmonella phage vB_SenM-S16</name>
    <dbReference type="NCBI Taxonomy" id="1087482"/>
    <lineage>
        <taxon>Viruses</taxon>
        <taxon>Duplodnaviria</taxon>
        <taxon>Heunggongvirae</taxon>
        <taxon>Uroviricota</taxon>
        <taxon>Caudoviricetes</taxon>
        <taxon>Straboviridae</taxon>
        <taxon>Tevenvirinae</taxon>
        <taxon>Gelderlandvirus</taxon>
        <taxon>Gelderlandvirus s16</taxon>
    </lineage>
</organism>
<comment type="function">
    <molecule>Mature tail fiber protein Gp37</molecule>
    <text evidence="5">Constitues the trimeric tip of the long tail fiber that mediates the attachment to the host OmpC receptor and lipopolysaccharides, together with the receptor-recognizing protein Gp38.</text>
</comment>
<comment type="function">
    <molecule>Intramolecular chaperone</molecule>
    <text evidence="1">The C-terminal chaperone protein mediates homotrimerization and proper folding of the catalytic trimer.</text>
</comment>
<comment type="subunit">
    <text evidence="4">Homotrimer. Interacts with the receptor-recognizing protein Gp38.</text>
</comment>
<comment type="subcellular location">
    <subcellularLocation>
        <location evidence="4">Virion</location>
    </subcellularLocation>
</comment>
<comment type="PTM">
    <text evidence="4">Proteolytic cleavage and release of the chaperone in the host cytosol stabilizes the folded protein.</text>
</comment>
<comment type="similarity">
    <text evidence="6">Belongs to the S16-like long tail fiber protein Gp37 family.</text>
</comment>
<proteinExistence type="evidence at protein level"/>
<evidence type="ECO:0000250" key="1">
    <source>
        <dbReference type="UniProtKB" id="Q04830"/>
    </source>
</evidence>
<evidence type="ECO:0000255" key="2"/>
<evidence type="ECO:0000255" key="3">
    <source>
        <dbReference type="PROSITE-ProRule" id="PRU01025"/>
    </source>
</evidence>
<evidence type="ECO:0000269" key="4">
    <source>
    </source>
</evidence>
<evidence type="ECO:0000303" key="5">
    <source>
    </source>
</evidence>
<evidence type="ECO:0000305" key="6"/>
<evidence type="ECO:0000305" key="7">
    <source>
    </source>
</evidence>
<evidence type="ECO:0007829" key="8">
    <source>
        <dbReference type="PDB" id="6F45"/>
    </source>
</evidence>
<feature type="chain" id="PRO_0000458703" description="Long tail fiber protein Gp37">
    <location>
        <begin position="1"/>
        <end position="749"/>
    </location>
</feature>
<feature type="chain" id="PRO_0000458704" description="Mature tail fiber protein Gp37">
    <location>
        <begin position="1"/>
        <end position="638"/>
    </location>
</feature>
<feature type="chain" id="PRO_0000458705" description="Intramolecular chaperone">
    <location>
        <begin position="639"/>
        <end position="749"/>
    </location>
</feature>
<feature type="domain" description="Peptidase S74" evidence="3">
    <location>
        <begin position="638"/>
        <end position="737"/>
    </location>
</feature>
<feature type="region of interest" description="Interaction with the receptor-recognizing protein gp38" evidence="4">
    <location>
        <begin position="633"/>
        <end position="636"/>
    </location>
</feature>
<feature type="coiled-coil region" evidence="2">
    <location>
        <begin position="720"/>
        <end position="749"/>
    </location>
</feature>
<feature type="site" description="Cleavage; by autolysis" evidence="7">
    <location>
        <begin position="638"/>
        <end position="639"/>
    </location>
</feature>
<feature type="strand" evidence="8">
    <location>
        <begin position="572"/>
        <end position="574"/>
    </location>
</feature>
<feature type="strand" evidence="8">
    <location>
        <begin position="580"/>
        <end position="584"/>
    </location>
</feature>
<feature type="strand" evidence="8">
    <location>
        <begin position="590"/>
        <end position="594"/>
    </location>
</feature>
<feature type="strand" evidence="8">
    <location>
        <begin position="597"/>
        <end position="602"/>
    </location>
</feature>
<feature type="strand" evidence="8">
    <location>
        <begin position="604"/>
        <end position="609"/>
    </location>
</feature>
<feature type="strand" evidence="8">
    <location>
        <begin position="614"/>
        <end position="619"/>
    </location>
</feature>
<feature type="strand" evidence="8">
    <location>
        <begin position="621"/>
        <end position="623"/>
    </location>
</feature>
<feature type="strand" evidence="8">
    <location>
        <begin position="629"/>
        <end position="632"/>
    </location>
</feature>
<feature type="strand" evidence="8">
    <location>
        <begin position="634"/>
        <end position="636"/>
    </location>
</feature>
<reference key="1">
    <citation type="journal article" date="2013" name="Mol. Microbiol.">
        <title>Long tail fibres of the novel broad-host-range T-even bacteriophage S16 specifically recognize Salmonella OmpC.</title>
        <authorList>
            <person name="Marti R."/>
            <person name="Zurfluh K."/>
            <person name="Hagens S."/>
            <person name="Pianezzi J."/>
            <person name="Klumpp J."/>
            <person name="Loessner M.J."/>
        </authorList>
    </citation>
    <scope>NUCLEOTIDE SEQUENCE [LARGE SCALE GENOMIC DNA]</scope>
</reference>
<reference key="2">
    <citation type="journal article" date="2018" name="Structure">
        <title>Salmonella Phage S16 Tail Fiber Adhesin Features a Rare Polyglycine Rich Domain for Host Recognition.</title>
        <authorList>
            <person name="Dunne M."/>
            <person name="Denyes J.M."/>
            <person name="Arndt H."/>
            <person name="Loessner M.J."/>
            <person name="Leiman P.G."/>
            <person name="Klumpp J."/>
        </authorList>
    </citation>
    <scope>X-RAY CRYSTALLOGRAPHY (1.70 ANGSTROMS) OF 567-749</scope>
    <scope>INTERACTION WITH THE RECEPTOR-RECOGNIZING PROTEIN GP38</scope>
    <scope>SUBCELLULAR LOCATION</scope>
    <scope>PROTEOLYTIC CLEAVAGE</scope>
</reference>
<organismHost>
    <name type="scientific">Salmonella enterica</name>
    <name type="common">Salmonella choleraesuis</name>
    <dbReference type="NCBI Taxonomy" id="28901"/>
</organismHost>
<name>FIB37_BPS16</name>
<dbReference type="EMBL" id="HQ331142">
    <property type="protein sequence ID" value="AEO97172.1"/>
    <property type="molecule type" value="Genomic_DNA"/>
</dbReference>
<dbReference type="RefSeq" id="YP_007501288.1">
    <property type="nucleotide sequence ID" value="NC_020416.1"/>
</dbReference>
<dbReference type="PDB" id="6F45">
    <property type="method" value="X-ray"/>
    <property type="resolution" value="1.70 A"/>
    <property type="chains" value="A/B/C=567-749"/>
</dbReference>
<dbReference type="PDBsum" id="6F45"/>
<dbReference type="SMR" id="M1EAS5"/>
<dbReference type="GeneID" id="14675489"/>
<dbReference type="KEGG" id="vg:14675489"/>
<dbReference type="OrthoDB" id="94at10239"/>
<dbReference type="Proteomes" id="UP000011284">
    <property type="component" value="Genome"/>
</dbReference>
<dbReference type="GO" id="GO:0098024">
    <property type="term" value="C:virus tail, fiber"/>
    <property type="evidence" value="ECO:0007669"/>
    <property type="project" value="UniProtKB-KW"/>
</dbReference>
<dbReference type="GO" id="GO:0046718">
    <property type="term" value="P:symbiont entry into host cell"/>
    <property type="evidence" value="ECO:0007669"/>
    <property type="project" value="UniProtKB-KW"/>
</dbReference>
<dbReference type="GO" id="GO:0019062">
    <property type="term" value="P:virion attachment to host cell"/>
    <property type="evidence" value="ECO:0007669"/>
    <property type="project" value="UniProtKB-KW"/>
</dbReference>
<dbReference type="InterPro" id="IPR030392">
    <property type="entry name" value="S74_ICA"/>
</dbReference>
<dbReference type="Pfam" id="PF13884">
    <property type="entry name" value="Peptidase_S74"/>
    <property type="match status" value="1"/>
</dbReference>
<dbReference type="PROSITE" id="PS51688">
    <property type="entry name" value="ICA"/>
    <property type="match status" value="1"/>
</dbReference>